<keyword id="KW-0106">Calcium</keyword>
<keyword id="KW-1015">Disulfide bond</keyword>
<keyword id="KW-0325">Glycoprotein</keyword>
<keyword id="KW-0326">Glycosidase</keyword>
<keyword id="KW-1032">Host cell membrane</keyword>
<keyword id="KW-1043">Host membrane</keyword>
<keyword id="KW-0378">Hydrolase</keyword>
<keyword id="KW-0472">Membrane</keyword>
<keyword id="KW-0479">Metal-binding</keyword>
<keyword id="KW-0735">Signal-anchor</keyword>
<keyword id="KW-0812">Transmembrane</keyword>
<keyword id="KW-1133">Transmembrane helix</keyword>
<keyword id="KW-0946">Virion</keyword>
<organismHost>
    <name type="scientific">Aves</name>
    <dbReference type="NCBI Taxonomy" id="8782"/>
</organismHost>
<organismHost>
    <name type="scientific">Equus caballus</name>
    <name type="common">Horse</name>
    <dbReference type="NCBI Taxonomy" id="9796"/>
</organismHost>
<reference key="1">
    <citation type="journal article" date="1993" name="Virology">
        <title>Phylogenetic analysis of the N8 neuraminidase gene of influenza A viruses.</title>
        <authorList>
            <person name="Saito T."/>
            <person name="Kawaoka Y."/>
            <person name="Webster R.G."/>
        </authorList>
    </citation>
    <scope>NUCLEOTIDE SEQUENCE [GENOMIC RNA]</scope>
</reference>
<reference key="2">
    <citation type="submission" date="2006-09" db="EMBL/GenBank/DDBJ databases">
        <title>Evolutionary characterization of H3N8 viruses isolated from ducks in Hokkaido.</title>
        <authorList>
            <person name="Kida H."/>
            <person name="Sakoda Y."/>
        </authorList>
    </citation>
    <scope>NUCLEOTIDE SEQUENCE [GENOMIC RNA]</scope>
</reference>
<reference key="3">
    <citation type="journal article" date="2004" name="Virus Res.">
        <title>Assembly and budding of influenza virus.</title>
        <authorList>
            <person name="Nayak D.P."/>
            <person name="Hui E.K."/>
            <person name="Barman S."/>
        </authorList>
    </citation>
    <scope>REVIEW</scope>
</reference>
<reference key="4">
    <citation type="journal article" date="2005" name="N. Engl. J. Med.">
        <title>Neuraminidase inhibitors for influenza.</title>
        <authorList>
            <person name="Moscona A."/>
        </authorList>
    </citation>
    <scope>REVIEW</scope>
</reference>
<reference key="5">
    <citation type="journal article" date="2005" name="Biol. Pharm. Bull.">
        <title>Sialobiology of influenza: molecular mechanism of host range variation of influenza viruses.</title>
        <authorList>
            <person name="Suzuki Y."/>
        </authorList>
    </citation>
    <scope>REVIEW</scope>
</reference>
<sequence length="470" mass="51992">MNPNQKIITIGSISLGLVVFNVLLHVVSIIVTVLVLGRGGNNGICNETVVREYNETVRIEKVTQWHNTSVVEYVPYWNEGTYMNNTEAICDVKGFAPFSKDNGIRIGSRGHVFVIREPFVSCSPTECRTFFLTQGSLLNDKHSNGTVKDRSPFRTLMSVEVGQSPNVYQARFEAVAWSATACHDGKKWMTVGVTGPDSKAVAVVHYGGVPTDVVNSWAGDILRTQESSCTCIQGDCYWVMTDGPANRQAQYRIYKANQGKIVGQTDVSFNGGHIEECSCYPNDGKVECVCRDNWTGTNRPVLVISPDLSYRVGYLCAGLPSDTPRGEDAQFTGSCTSPMGNQGYGVKGFGFRQGTDVWMGRTISRTSRSGFEILRVRNGWTQTSKEQVRKQVVVDNLNWSGYSGSFTLPVELSGKDCLVPCFWVEMIRGKPEEKTIWTSSSSIVMCGVDYEVADWSWHDGAILPFDIDKM</sequence>
<proteinExistence type="inferred from homology"/>
<accession>Q07572</accession>
<accession>Q08IH0</accession>
<protein>
    <recommendedName>
        <fullName evidence="1">Neuraminidase</fullName>
        <ecNumber evidence="1">3.2.1.18</ecNumber>
    </recommendedName>
</protein>
<evidence type="ECO:0000255" key="1">
    <source>
        <dbReference type="HAMAP-Rule" id="MF_04071"/>
    </source>
</evidence>
<dbReference type="EC" id="3.2.1.18" evidence="1"/>
<dbReference type="EMBL" id="L06574">
    <property type="protein sequence ID" value="AAA43372.1"/>
    <property type="molecule type" value="Genomic_RNA"/>
</dbReference>
<dbReference type="EMBL" id="AB275285">
    <property type="protein sequence ID" value="BAF33061.2"/>
    <property type="molecule type" value="Genomic_RNA"/>
</dbReference>
<dbReference type="SMR" id="Q07572"/>
<dbReference type="CAZy" id="GH34">
    <property type="family name" value="Glycoside Hydrolase Family 34"/>
</dbReference>
<dbReference type="GlyCosmos" id="Q07572">
    <property type="glycosylation" value="7 sites, No reported glycans"/>
</dbReference>
<dbReference type="Proteomes" id="UP000008578">
    <property type="component" value="Genome"/>
</dbReference>
<dbReference type="GO" id="GO:0020002">
    <property type="term" value="C:host cell plasma membrane"/>
    <property type="evidence" value="ECO:0007669"/>
    <property type="project" value="UniProtKB-SubCell"/>
</dbReference>
<dbReference type="GO" id="GO:0016020">
    <property type="term" value="C:membrane"/>
    <property type="evidence" value="ECO:0007669"/>
    <property type="project" value="UniProtKB-UniRule"/>
</dbReference>
<dbReference type="GO" id="GO:0055036">
    <property type="term" value="C:virion membrane"/>
    <property type="evidence" value="ECO:0007669"/>
    <property type="project" value="UniProtKB-SubCell"/>
</dbReference>
<dbReference type="GO" id="GO:0004308">
    <property type="term" value="F:exo-alpha-sialidase activity"/>
    <property type="evidence" value="ECO:0007669"/>
    <property type="project" value="UniProtKB-UniRule"/>
</dbReference>
<dbReference type="GO" id="GO:0046872">
    <property type="term" value="F:metal ion binding"/>
    <property type="evidence" value="ECO:0007669"/>
    <property type="project" value="UniProtKB-UniRule"/>
</dbReference>
<dbReference type="GO" id="GO:0005975">
    <property type="term" value="P:carbohydrate metabolic process"/>
    <property type="evidence" value="ECO:0007669"/>
    <property type="project" value="InterPro"/>
</dbReference>
<dbReference type="GO" id="GO:0046761">
    <property type="term" value="P:viral budding from plasma membrane"/>
    <property type="evidence" value="ECO:0007669"/>
    <property type="project" value="UniProtKB-UniRule"/>
</dbReference>
<dbReference type="Gene3D" id="2.120.10.10">
    <property type="match status" value="1"/>
</dbReference>
<dbReference type="HAMAP" id="MF_04071">
    <property type="entry name" value="INFV_NRAM"/>
    <property type="match status" value="1"/>
</dbReference>
<dbReference type="InterPro" id="IPR001860">
    <property type="entry name" value="Glyco_hydro_34"/>
</dbReference>
<dbReference type="InterPro" id="IPR036278">
    <property type="entry name" value="Sialidase_sf"/>
</dbReference>
<dbReference type="Pfam" id="PF00064">
    <property type="entry name" value="Neur"/>
    <property type="match status" value="1"/>
</dbReference>
<dbReference type="SUPFAM" id="SSF50939">
    <property type="entry name" value="Sialidases"/>
    <property type="match status" value="1"/>
</dbReference>
<gene>
    <name evidence="1" type="primary">NA</name>
</gene>
<comment type="function">
    <text evidence="1">Catalyzes the removal of terminal sialic acid residues from viral and cellular glycoconjugates. Cleaves off the terminal sialic acids on the glycosylated HA during virus budding to facilitate virus release. Additionally helps virus spread through the circulation by further removing sialic acids from the cell surface. These cleavages prevent self-aggregation and ensure the efficient spread of the progeny virus from cell to cell. Otherwise, infection would be limited to one round of replication. Described as a receptor-destroying enzyme because it cleaves a terminal sialic acid from the cellular receptors. May facilitate viral invasion of the upper airways by cleaving the sialic acid moieties on the mucin of the airway epithelial cells. Likely to plays a role in the budding process through its association with lipid rafts during intracellular transport. May additionally display a raft-association independent effect on budding. Plays a role in the determination of host range restriction on replication and virulence. Sialidase activity in late endosome/lysosome traffic seems to enhance virus replication.</text>
</comment>
<comment type="catalytic activity">
    <reaction evidence="1">
        <text>Hydrolysis of alpha-(2-&gt;3)-, alpha-(2-&gt;6)-, alpha-(2-&gt;8)- glycosidic linkages of terminal sialic acid residues in oligosaccharides, glycoproteins, glycolipids, colominic acid and synthetic substrates.</text>
        <dbReference type="EC" id="3.2.1.18"/>
    </reaction>
</comment>
<comment type="cofactor">
    <cofactor evidence="1">
        <name>Ca(2+)</name>
        <dbReference type="ChEBI" id="CHEBI:29108"/>
    </cofactor>
</comment>
<comment type="activity regulation">
    <text evidence="1">Inhibited by the neuraminidase inhibitors zanamivir (Relenza) and oseltamivir (Tamiflu). These drugs interfere with the release of progeny virus from infected cells and are effective against all influenza strains. Resistance to neuraminidase inhibitors is quite rare.</text>
</comment>
<comment type="subunit">
    <text evidence="1">Homotetramer.</text>
</comment>
<comment type="subcellular location">
    <subcellularLocation>
        <location evidence="1">Virion membrane</location>
    </subcellularLocation>
    <subcellularLocation>
        <location evidence="1">Host apical cell membrane</location>
        <topology evidence="1">Single-pass type II membrane protein</topology>
    </subcellularLocation>
    <text evidence="1">Preferentially accumulates at the apical plasma membrane in infected polarized epithelial cells, which is the virus assembly site. Uses lipid rafts for cell surface transport and apical sorting. In the virion, forms a mushroom-shaped spike on the surface of the membrane.</text>
</comment>
<comment type="domain">
    <text evidence="1">Intact N-terminus is essential for virion morphogenesis. Possesses two apical sorting signals, one in the ectodomain, which is likely to be a glycan, and the other in the transmembrane domain. The transmembrane domain also plays a role in lipid raft association.</text>
</comment>
<comment type="PTM">
    <text evidence="1">N-glycosylated.</text>
</comment>
<comment type="miscellaneous">
    <text>The influenza A genome consist of 8 RNA segments. Genetic variation of hemagglutinin and/or neuraminidase genes results in the emergence of new influenza strains. The mechanism of variation can be the result of point mutations or the result of genetic reassortment between segments of two different strains.</text>
</comment>
<comment type="similarity">
    <text evidence="1">Belongs to the glycosyl hydrolase 34 family.</text>
</comment>
<organism>
    <name type="scientific">Influenza A virus (strain A/Duck/Hokkaido/8/1980 H3N8)</name>
    <dbReference type="NCBI Taxonomy" id="387207"/>
    <lineage>
        <taxon>Viruses</taxon>
        <taxon>Riboviria</taxon>
        <taxon>Orthornavirae</taxon>
        <taxon>Negarnaviricota</taxon>
        <taxon>Polyploviricotina</taxon>
        <taxon>Insthoviricetes</taxon>
        <taxon>Articulavirales</taxon>
        <taxon>Orthomyxoviridae</taxon>
        <taxon>Alphainfluenzavirus</taxon>
        <taxon>Alphainfluenzavirus influenzae</taxon>
        <taxon>Influenza A virus</taxon>
    </lineage>
</organism>
<feature type="chain" id="PRO_0000078686" description="Neuraminidase">
    <location>
        <begin position="1"/>
        <end position="470"/>
    </location>
</feature>
<feature type="topological domain" description="Intravirion" evidence="1">
    <location>
        <begin position="1"/>
        <end position="14"/>
    </location>
</feature>
<feature type="transmembrane region" description="Helical" evidence="1">
    <location>
        <begin position="15"/>
        <end position="35"/>
    </location>
</feature>
<feature type="topological domain" description="Virion surface" evidence="1">
    <location>
        <begin position="36"/>
        <end position="470"/>
    </location>
</feature>
<feature type="region of interest" description="Involved in apical transport and lipid raft association" evidence="1">
    <location>
        <begin position="11"/>
        <end position="32"/>
    </location>
</feature>
<feature type="region of interest" description="Hypervariable stalk region" evidence="1">
    <location>
        <begin position="32"/>
        <end position="86"/>
    </location>
</feature>
<feature type="region of interest" description="Head of neuraminidase" evidence="1">
    <location>
        <begin position="89"/>
        <end position="470"/>
    </location>
</feature>
<feature type="active site" description="Proton donor/acceptor" evidence="1">
    <location>
        <position position="149"/>
    </location>
</feature>
<feature type="active site" description="Nucleophile" evidence="1">
    <location>
        <position position="402"/>
    </location>
</feature>
<feature type="binding site" evidence="1">
    <location>
        <position position="116"/>
    </location>
    <ligand>
        <name>substrate</name>
    </ligand>
</feature>
<feature type="binding site" evidence="1">
    <location>
        <position position="150"/>
    </location>
    <ligand>
        <name>substrate</name>
    </ligand>
</feature>
<feature type="binding site" evidence="1">
    <location>
        <begin position="275"/>
        <end position="276"/>
    </location>
    <ligand>
        <name>substrate</name>
    </ligand>
</feature>
<feature type="binding site" evidence="1">
    <location>
        <position position="291"/>
    </location>
    <ligand>
        <name>substrate</name>
    </ligand>
</feature>
<feature type="binding site" evidence="1">
    <location>
        <position position="292"/>
    </location>
    <ligand>
        <name>Ca(2+)</name>
        <dbReference type="ChEBI" id="CHEBI:29108"/>
    </ligand>
</feature>
<feature type="binding site" evidence="1">
    <location>
        <position position="296"/>
    </location>
    <ligand>
        <name>Ca(2+)</name>
        <dbReference type="ChEBI" id="CHEBI:29108"/>
    </ligand>
</feature>
<feature type="binding site" evidence="1">
    <location>
        <position position="322"/>
    </location>
    <ligand>
        <name>Ca(2+)</name>
        <dbReference type="ChEBI" id="CHEBI:29108"/>
    </ligand>
</feature>
<feature type="binding site" evidence="1">
    <location>
        <position position="368"/>
    </location>
    <ligand>
        <name>substrate</name>
    </ligand>
</feature>
<feature type="glycosylation site" description="N-linked (GlcNAc...) asparagine; by host" evidence="1">
    <location>
        <position position="46"/>
    </location>
</feature>
<feature type="glycosylation site" description="N-linked (GlcNAc...) asparagine; by host" evidence="1">
    <location>
        <position position="54"/>
    </location>
</feature>
<feature type="glycosylation site" description="N-linked (GlcNAc...) asparagine; by host" evidence="1">
    <location>
        <position position="67"/>
    </location>
</feature>
<feature type="glycosylation site" description="N-linked (GlcNAc...) asparagine; by host" evidence="1">
    <location>
        <position position="84"/>
    </location>
</feature>
<feature type="glycosylation site" description="N-linked (GlcNAc...) asparagine; by host" evidence="1">
    <location>
        <position position="144"/>
    </location>
</feature>
<feature type="glycosylation site" description="N-linked (GlcNAc...) asparagine; by host" evidence="1">
    <location>
        <position position="293"/>
    </location>
</feature>
<feature type="glycosylation site" description="N-linked (GlcNAc...) asparagine; by host" evidence="1">
    <location>
        <position position="398"/>
    </location>
</feature>
<feature type="disulfide bond" evidence="1">
    <location>
        <begin position="90"/>
        <end position="417"/>
    </location>
</feature>
<feature type="disulfide bond" evidence="1">
    <location>
        <begin position="122"/>
        <end position="127"/>
    </location>
</feature>
<feature type="disulfide bond" evidence="1">
    <location>
        <begin position="182"/>
        <end position="229"/>
    </location>
</feature>
<feature type="disulfide bond" evidence="1">
    <location>
        <begin position="231"/>
        <end position="236"/>
    </location>
</feature>
<feature type="disulfide bond" evidence="1">
    <location>
        <begin position="277"/>
        <end position="290"/>
    </location>
</feature>
<feature type="disulfide bond" evidence="1">
    <location>
        <begin position="279"/>
        <end position="288"/>
    </location>
</feature>
<feature type="disulfide bond" evidence="1">
    <location>
        <begin position="316"/>
        <end position="335"/>
    </location>
</feature>
<feature type="disulfide bond" evidence="1">
    <location>
        <begin position="421"/>
        <end position="446"/>
    </location>
</feature>
<feature type="sequence conflict" description="In Ref. 1; AAA43372." ref="1">
    <original>N</original>
    <variation>H</variation>
    <location>
        <position position="270"/>
    </location>
</feature>
<name>NRAM_I80A6</name>